<gene>
    <name evidence="1" type="primary">argC</name>
    <name type="ordered locus">PFLU_5548</name>
</gene>
<proteinExistence type="inferred from homology"/>
<organism>
    <name type="scientific">Pseudomonas fluorescens (strain SBW25)</name>
    <dbReference type="NCBI Taxonomy" id="216595"/>
    <lineage>
        <taxon>Bacteria</taxon>
        <taxon>Pseudomonadati</taxon>
        <taxon>Pseudomonadota</taxon>
        <taxon>Gammaproteobacteria</taxon>
        <taxon>Pseudomonadales</taxon>
        <taxon>Pseudomonadaceae</taxon>
        <taxon>Pseudomonas</taxon>
    </lineage>
</organism>
<comment type="function">
    <text evidence="1">Catalyzes the NADPH-dependent reduction of N-acetyl-5-glutamyl phosphate to yield N-acetyl-L-glutamate 5-semialdehyde.</text>
</comment>
<comment type="catalytic activity">
    <reaction evidence="1">
        <text>N-acetyl-L-glutamate 5-semialdehyde + phosphate + NADP(+) = N-acetyl-L-glutamyl 5-phosphate + NADPH + H(+)</text>
        <dbReference type="Rhea" id="RHEA:21588"/>
        <dbReference type="ChEBI" id="CHEBI:15378"/>
        <dbReference type="ChEBI" id="CHEBI:29123"/>
        <dbReference type="ChEBI" id="CHEBI:43474"/>
        <dbReference type="ChEBI" id="CHEBI:57783"/>
        <dbReference type="ChEBI" id="CHEBI:57936"/>
        <dbReference type="ChEBI" id="CHEBI:58349"/>
        <dbReference type="EC" id="1.2.1.38"/>
    </reaction>
</comment>
<comment type="pathway">
    <text evidence="1">Amino-acid biosynthesis; L-arginine biosynthesis; N(2)-acetyl-L-ornithine from L-glutamate: step 3/4.</text>
</comment>
<comment type="subcellular location">
    <subcellularLocation>
        <location evidence="1">Cytoplasm</location>
    </subcellularLocation>
</comment>
<comment type="similarity">
    <text evidence="1">Belongs to the NAGSA dehydrogenase family. Type 1 subfamily.</text>
</comment>
<accession>C3K2Z7</accession>
<name>ARGC_PSEFS</name>
<protein>
    <recommendedName>
        <fullName evidence="1">N-acetyl-gamma-glutamyl-phosphate reductase</fullName>
        <shortName evidence="1">AGPR</shortName>
        <ecNumber evidence="1">1.2.1.38</ecNumber>
    </recommendedName>
    <alternativeName>
        <fullName evidence="1">N-acetyl-glutamate semialdehyde dehydrogenase</fullName>
        <shortName evidence="1">NAGSA dehydrogenase</shortName>
    </alternativeName>
</protein>
<sequence>MVKVGIVGGTGYTGVEFLRLLAQHPQAEVVVITSRSEAGLAVADMYPNLRGHYDGLAFSVPDISTLGACDVVFFATPHGVAHALAGELLAAGTKVIDLSADFRLQDADEWAKWYGQPHGAPELLEEAVYGLPEVNREQIKQARLIAVPGCYPTATQLGFLPLLEAGLADVSRLIADCKSGVSGAGRGAAVGSLYSETSESMKAYAVKGHRHLPEIRQGLRRAAGQDVGLTFVPHLTPMIRGIHSTLYATVVDRSVDLQALFEKRYANEPFVDVMPAGSHPETRSVRGANVCRIAVHRPQDGDLVVVLSVIDNLVKGASGQAVQNMNILFGLDEKLGLSHAGMLP</sequence>
<dbReference type="EC" id="1.2.1.38" evidence="1"/>
<dbReference type="EMBL" id="AM181176">
    <property type="protein sequence ID" value="CAY52800.1"/>
    <property type="molecule type" value="Genomic_DNA"/>
</dbReference>
<dbReference type="RefSeq" id="WP_015886146.1">
    <property type="nucleotide sequence ID" value="NC_012660.1"/>
</dbReference>
<dbReference type="SMR" id="C3K2Z7"/>
<dbReference type="STRING" id="294.SRM1_05205"/>
<dbReference type="PATRIC" id="fig|216595.4.peg.5672"/>
<dbReference type="eggNOG" id="COG0002">
    <property type="taxonomic scope" value="Bacteria"/>
</dbReference>
<dbReference type="HOGENOM" id="CLU_006384_0_1_6"/>
<dbReference type="OrthoDB" id="9801289at2"/>
<dbReference type="UniPathway" id="UPA00068">
    <property type="reaction ID" value="UER00108"/>
</dbReference>
<dbReference type="GO" id="GO:0005737">
    <property type="term" value="C:cytoplasm"/>
    <property type="evidence" value="ECO:0007669"/>
    <property type="project" value="UniProtKB-SubCell"/>
</dbReference>
<dbReference type="GO" id="GO:0003942">
    <property type="term" value="F:N-acetyl-gamma-glutamyl-phosphate reductase activity"/>
    <property type="evidence" value="ECO:0007669"/>
    <property type="project" value="UniProtKB-UniRule"/>
</dbReference>
<dbReference type="GO" id="GO:0051287">
    <property type="term" value="F:NAD binding"/>
    <property type="evidence" value="ECO:0007669"/>
    <property type="project" value="InterPro"/>
</dbReference>
<dbReference type="GO" id="GO:0070401">
    <property type="term" value="F:NADP+ binding"/>
    <property type="evidence" value="ECO:0007669"/>
    <property type="project" value="InterPro"/>
</dbReference>
<dbReference type="GO" id="GO:0006526">
    <property type="term" value="P:L-arginine biosynthetic process"/>
    <property type="evidence" value="ECO:0007669"/>
    <property type="project" value="UniProtKB-UniRule"/>
</dbReference>
<dbReference type="CDD" id="cd23934">
    <property type="entry name" value="AGPR_1_C"/>
    <property type="match status" value="1"/>
</dbReference>
<dbReference type="CDD" id="cd17895">
    <property type="entry name" value="AGPR_1_N"/>
    <property type="match status" value="1"/>
</dbReference>
<dbReference type="FunFam" id="3.30.360.10:FF:000014">
    <property type="entry name" value="N-acetyl-gamma-glutamyl-phosphate reductase"/>
    <property type="match status" value="1"/>
</dbReference>
<dbReference type="Gene3D" id="3.30.360.10">
    <property type="entry name" value="Dihydrodipicolinate Reductase, domain 2"/>
    <property type="match status" value="1"/>
</dbReference>
<dbReference type="Gene3D" id="3.40.50.720">
    <property type="entry name" value="NAD(P)-binding Rossmann-like Domain"/>
    <property type="match status" value="1"/>
</dbReference>
<dbReference type="HAMAP" id="MF_00150">
    <property type="entry name" value="ArgC_type1"/>
    <property type="match status" value="1"/>
</dbReference>
<dbReference type="InterPro" id="IPR023013">
    <property type="entry name" value="AGPR_AS"/>
</dbReference>
<dbReference type="InterPro" id="IPR000706">
    <property type="entry name" value="AGPR_type-1"/>
</dbReference>
<dbReference type="InterPro" id="IPR036291">
    <property type="entry name" value="NAD(P)-bd_dom_sf"/>
</dbReference>
<dbReference type="InterPro" id="IPR050085">
    <property type="entry name" value="NAGSA_dehydrogenase"/>
</dbReference>
<dbReference type="InterPro" id="IPR000534">
    <property type="entry name" value="Semialdehyde_DH_NAD-bd"/>
</dbReference>
<dbReference type="NCBIfam" id="TIGR01850">
    <property type="entry name" value="argC"/>
    <property type="match status" value="1"/>
</dbReference>
<dbReference type="PANTHER" id="PTHR32338:SF10">
    <property type="entry name" value="N-ACETYL-GAMMA-GLUTAMYL-PHOSPHATE REDUCTASE, CHLOROPLASTIC-RELATED"/>
    <property type="match status" value="1"/>
</dbReference>
<dbReference type="PANTHER" id="PTHR32338">
    <property type="entry name" value="N-ACETYL-GAMMA-GLUTAMYL-PHOSPHATE REDUCTASE, CHLOROPLASTIC-RELATED-RELATED"/>
    <property type="match status" value="1"/>
</dbReference>
<dbReference type="Pfam" id="PF01118">
    <property type="entry name" value="Semialdhyde_dh"/>
    <property type="match status" value="1"/>
</dbReference>
<dbReference type="Pfam" id="PF22698">
    <property type="entry name" value="Semialdhyde_dhC_1"/>
    <property type="match status" value="1"/>
</dbReference>
<dbReference type="SMART" id="SM00859">
    <property type="entry name" value="Semialdhyde_dh"/>
    <property type="match status" value="1"/>
</dbReference>
<dbReference type="SUPFAM" id="SSF55347">
    <property type="entry name" value="Glyceraldehyde-3-phosphate dehydrogenase-like, C-terminal domain"/>
    <property type="match status" value="1"/>
</dbReference>
<dbReference type="SUPFAM" id="SSF51735">
    <property type="entry name" value="NAD(P)-binding Rossmann-fold domains"/>
    <property type="match status" value="1"/>
</dbReference>
<dbReference type="PROSITE" id="PS01224">
    <property type="entry name" value="ARGC"/>
    <property type="match status" value="1"/>
</dbReference>
<keyword id="KW-0028">Amino-acid biosynthesis</keyword>
<keyword id="KW-0055">Arginine biosynthesis</keyword>
<keyword id="KW-0963">Cytoplasm</keyword>
<keyword id="KW-0521">NADP</keyword>
<keyword id="KW-0560">Oxidoreductase</keyword>
<evidence type="ECO:0000255" key="1">
    <source>
        <dbReference type="HAMAP-Rule" id="MF_00150"/>
    </source>
</evidence>
<reference key="1">
    <citation type="journal article" date="2009" name="Genome Biol.">
        <title>Genomic and genetic analyses of diversity and plant interactions of Pseudomonas fluorescens.</title>
        <authorList>
            <person name="Silby M.W."/>
            <person name="Cerdeno-Tarraga A.M."/>
            <person name="Vernikos G.S."/>
            <person name="Giddens S.R."/>
            <person name="Jackson R.W."/>
            <person name="Preston G.M."/>
            <person name="Zhang X.-X."/>
            <person name="Moon C.D."/>
            <person name="Gehrig S.M."/>
            <person name="Godfrey S.A.C."/>
            <person name="Knight C.G."/>
            <person name="Malone J.G."/>
            <person name="Robinson Z."/>
            <person name="Spiers A.J."/>
            <person name="Harris S."/>
            <person name="Challis G.L."/>
            <person name="Yaxley A.M."/>
            <person name="Harris D."/>
            <person name="Seeger K."/>
            <person name="Murphy L."/>
            <person name="Rutter S."/>
            <person name="Squares R."/>
            <person name="Quail M.A."/>
            <person name="Saunders E."/>
            <person name="Mavromatis K."/>
            <person name="Brettin T.S."/>
            <person name="Bentley S.D."/>
            <person name="Hothersall J."/>
            <person name="Stephens E."/>
            <person name="Thomas C.M."/>
            <person name="Parkhill J."/>
            <person name="Levy S.B."/>
            <person name="Rainey P.B."/>
            <person name="Thomson N.R."/>
        </authorList>
    </citation>
    <scope>NUCLEOTIDE SEQUENCE [LARGE SCALE GENOMIC DNA]</scope>
    <source>
        <strain>SBW25</strain>
    </source>
</reference>
<feature type="chain" id="PRO_1000203410" description="N-acetyl-gamma-glutamyl-phosphate reductase">
    <location>
        <begin position="1"/>
        <end position="344"/>
    </location>
</feature>
<feature type="active site" evidence="1">
    <location>
        <position position="150"/>
    </location>
</feature>